<accession>Q74AR6</accession>
<comment type="function">
    <text evidence="1">Catalyzes the reversible conversion of 2-phosphoglycerate (2-PG) into phosphoenolpyruvate (PEP). It is essential for the degradation of carbohydrates via glycolysis.</text>
</comment>
<comment type="catalytic activity">
    <reaction evidence="1">
        <text>(2R)-2-phosphoglycerate = phosphoenolpyruvate + H2O</text>
        <dbReference type="Rhea" id="RHEA:10164"/>
        <dbReference type="ChEBI" id="CHEBI:15377"/>
        <dbReference type="ChEBI" id="CHEBI:58289"/>
        <dbReference type="ChEBI" id="CHEBI:58702"/>
        <dbReference type="EC" id="4.2.1.11"/>
    </reaction>
</comment>
<comment type="cofactor">
    <cofactor evidence="1">
        <name>Mg(2+)</name>
        <dbReference type="ChEBI" id="CHEBI:18420"/>
    </cofactor>
    <text evidence="1">Binds a second Mg(2+) ion via substrate during catalysis.</text>
</comment>
<comment type="pathway">
    <text evidence="1">Carbohydrate degradation; glycolysis; pyruvate from D-glyceraldehyde 3-phosphate: step 4/5.</text>
</comment>
<comment type="subcellular location">
    <subcellularLocation>
        <location evidence="1">Cytoplasm</location>
    </subcellularLocation>
    <subcellularLocation>
        <location evidence="1">Secreted</location>
    </subcellularLocation>
    <subcellularLocation>
        <location evidence="1">Cell surface</location>
    </subcellularLocation>
    <text evidence="1">Fractions of enolase are present in both the cytoplasm and on the cell surface.</text>
</comment>
<comment type="similarity">
    <text evidence="1">Belongs to the enolase family.</text>
</comment>
<keyword id="KW-0963">Cytoplasm</keyword>
<keyword id="KW-0324">Glycolysis</keyword>
<keyword id="KW-0456">Lyase</keyword>
<keyword id="KW-0460">Magnesium</keyword>
<keyword id="KW-0479">Metal-binding</keyword>
<keyword id="KW-1185">Reference proteome</keyword>
<keyword id="KW-0964">Secreted</keyword>
<evidence type="ECO:0000255" key="1">
    <source>
        <dbReference type="HAMAP-Rule" id="MF_00318"/>
    </source>
</evidence>
<proteinExistence type="inferred from homology"/>
<reference key="1">
    <citation type="journal article" date="2003" name="Science">
        <title>Genome of Geobacter sulfurreducens: metal reduction in subsurface environments.</title>
        <authorList>
            <person name="Methe B.A."/>
            <person name="Nelson K.E."/>
            <person name="Eisen J.A."/>
            <person name="Paulsen I.T."/>
            <person name="Nelson W.C."/>
            <person name="Heidelberg J.F."/>
            <person name="Wu D."/>
            <person name="Wu M."/>
            <person name="Ward N.L."/>
            <person name="Beanan M.J."/>
            <person name="Dodson R.J."/>
            <person name="Madupu R."/>
            <person name="Brinkac L.M."/>
            <person name="Daugherty S.C."/>
            <person name="DeBoy R.T."/>
            <person name="Durkin A.S."/>
            <person name="Gwinn M.L."/>
            <person name="Kolonay J.F."/>
            <person name="Sullivan S.A."/>
            <person name="Haft D.H."/>
            <person name="Selengut J."/>
            <person name="Davidsen T.M."/>
            <person name="Zafar N."/>
            <person name="White O."/>
            <person name="Tran B."/>
            <person name="Romero C."/>
            <person name="Forberger H.A."/>
            <person name="Weidman J.F."/>
            <person name="Khouri H.M."/>
            <person name="Feldblyum T.V."/>
            <person name="Utterback T.R."/>
            <person name="Van Aken S.E."/>
            <person name="Lovley D.R."/>
            <person name="Fraser C.M."/>
        </authorList>
    </citation>
    <scope>NUCLEOTIDE SEQUENCE [LARGE SCALE GENOMIC DNA]</scope>
    <source>
        <strain>ATCC 51573 / DSM 12127 / PCA</strain>
    </source>
</reference>
<sequence>MSEITDVYAREILDSRGNPTLEVEVFLESGVMGRAAVPSGASTGEREALELRDGDASRYLGKGVLKAVDNVNDIIAEQLIGMEATDQVGIDRRMLELDGTEYKSTLGANAILGVSLAVAKAAAEEVGLPLYQYIGGCNARELPLPMMNILNGGAHADNNVDIQEFMIMPAGARSFSEALRMGAEVFHALKSVLKGKGYNTAVGDEGGFAPNLKSNEEALEVIMEAIAKAGYKAGEDILLALDVASSELFKDGKYFLENEAKPEKTADELIDFYENLVNKYPIISIEDGMAENDWEGWKKITDRLGKRVQLVGDDLFVTNTKILKEGISKGVANSILIKLNQIGTLTETLDAIETAKRAGYTTVISHRSGETEDTTLADLAVAVNAGQIKTGSLCRTDRVAKYNQLLRIEDELDVTAQFRGKDVFYNLR</sequence>
<protein>
    <recommendedName>
        <fullName evidence="1">Enolase</fullName>
        <ecNumber evidence="1">4.2.1.11</ecNumber>
    </recommendedName>
    <alternativeName>
        <fullName evidence="1">2-phospho-D-glycerate hydro-lyase</fullName>
    </alternativeName>
    <alternativeName>
        <fullName evidence="1">2-phosphoglycerate dehydratase</fullName>
    </alternativeName>
</protein>
<feature type="chain" id="PRO_0000133891" description="Enolase">
    <location>
        <begin position="1"/>
        <end position="428"/>
    </location>
</feature>
<feature type="active site" description="Proton donor" evidence="1">
    <location>
        <position position="205"/>
    </location>
</feature>
<feature type="active site" description="Proton acceptor" evidence="1">
    <location>
        <position position="338"/>
    </location>
</feature>
<feature type="binding site" evidence="1">
    <location>
        <position position="163"/>
    </location>
    <ligand>
        <name>(2R)-2-phosphoglycerate</name>
        <dbReference type="ChEBI" id="CHEBI:58289"/>
    </ligand>
</feature>
<feature type="binding site" evidence="1">
    <location>
        <position position="242"/>
    </location>
    <ligand>
        <name>Mg(2+)</name>
        <dbReference type="ChEBI" id="CHEBI:18420"/>
    </ligand>
</feature>
<feature type="binding site" evidence="1">
    <location>
        <position position="286"/>
    </location>
    <ligand>
        <name>Mg(2+)</name>
        <dbReference type="ChEBI" id="CHEBI:18420"/>
    </ligand>
</feature>
<feature type="binding site" evidence="1">
    <location>
        <position position="313"/>
    </location>
    <ligand>
        <name>Mg(2+)</name>
        <dbReference type="ChEBI" id="CHEBI:18420"/>
    </ligand>
</feature>
<feature type="binding site" evidence="1">
    <location>
        <position position="338"/>
    </location>
    <ligand>
        <name>(2R)-2-phosphoglycerate</name>
        <dbReference type="ChEBI" id="CHEBI:58289"/>
    </ligand>
</feature>
<feature type="binding site" evidence="1">
    <location>
        <position position="367"/>
    </location>
    <ligand>
        <name>(2R)-2-phosphoglycerate</name>
        <dbReference type="ChEBI" id="CHEBI:58289"/>
    </ligand>
</feature>
<feature type="binding site" evidence="1">
    <location>
        <position position="368"/>
    </location>
    <ligand>
        <name>(2R)-2-phosphoglycerate</name>
        <dbReference type="ChEBI" id="CHEBI:58289"/>
    </ligand>
</feature>
<feature type="binding site" evidence="1">
    <location>
        <position position="389"/>
    </location>
    <ligand>
        <name>(2R)-2-phosphoglycerate</name>
        <dbReference type="ChEBI" id="CHEBI:58289"/>
    </ligand>
</feature>
<gene>
    <name evidence="1" type="primary">eno</name>
    <name type="ordered locus">GSU2286</name>
</gene>
<organism>
    <name type="scientific">Geobacter sulfurreducens (strain ATCC 51573 / DSM 12127 / PCA)</name>
    <dbReference type="NCBI Taxonomy" id="243231"/>
    <lineage>
        <taxon>Bacteria</taxon>
        <taxon>Pseudomonadati</taxon>
        <taxon>Thermodesulfobacteriota</taxon>
        <taxon>Desulfuromonadia</taxon>
        <taxon>Geobacterales</taxon>
        <taxon>Geobacteraceae</taxon>
        <taxon>Geobacter</taxon>
    </lineage>
</organism>
<dbReference type="EC" id="4.2.1.11" evidence="1"/>
<dbReference type="EMBL" id="AE017180">
    <property type="protein sequence ID" value="AAR35662.1"/>
    <property type="molecule type" value="Genomic_DNA"/>
</dbReference>
<dbReference type="RefSeq" id="NP_953335.1">
    <property type="nucleotide sequence ID" value="NC_002939.5"/>
</dbReference>
<dbReference type="RefSeq" id="WP_010942923.1">
    <property type="nucleotide sequence ID" value="NC_002939.5"/>
</dbReference>
<dbReference type="SMR" id="Q74AR6"/>
<dbReference type="FunCoup" id="Q74AR6">
    <property type="interactions" value="497"/>
</dbReference>
<dbReference type="STRING" id="243231.GSU2286"/>
<dbReference type="EnsemblBacteria" id="AAR35662">
    <property type="protein sequence ID" value="AAR35662"/>
    <property type="gene ID" value="GSU2286"/>
</dbReference>
<dbReference type="KEGG" id="gsu:GSU2286"/>
<dbReference type="PATRIC" id="fig|243231.5.peg.2319"/>
<dbReference type="eggNOG" id="COG0148">
    <property type="taxonomic scope" value="Bacteria"/>
</dbReference>
<dbReference type="HOGENOM" id="CLU_031223_2_1_7"/>
<dbReference type="InParanoid" id="Q74AR6"/>
<dbReference type="OrthoDB" id="9804716at2"/>
<dbReference type="UniPathway" id="UPA00109">
    <property type="reaction ID" value="UER00187"/>
</dbReference>
<dbReference type="Proteomes" id="UP000000577">
    <property type="component" value="Chromosome"/>
</dbReference>
<dbReference type="GO" id="GO:0009986">
    <property type="term" value="C:cell surface"/>
    <property type="evidence" value="ECO:0007669"/>
    <property type="project" value="UniProtKB-SubCell"/>
</dbReference>
<dbReference type="GO" id="GO:0005576">
    <property type="term" value="C:extracellular region"/>
    <property type="evidence" value="ECO:0007669"/>
    <property type="project" value="UniProtKB-SubCell"/>
</dbReference>
<dbReference type="GO" id="GO:0000015">
    <property type="term" value="C:phosphopyruvate hydratase complex"/>
    <property type="evidence" value="ECO:0000318"/>
    <property type="project" value="GO_Central"/>
</dbReference>
<dbReference type="GO" id="GO:0000287">
    <property type="term" value="F:magnesium ion binding"/>
    <property type="evidence" value="ECO:0007669"/>
    <property type="project" value="UniProtKB-UniRule"/>
</dbReference>
<dbReference type="GO" id="GO:0004634">
    <property type="term" value="F:phosphopyruvate hydratase activity"/>
    <property type="evidence" value="ECO:0000318"/>
    <property type="project" value="GO_Central"/>
</dbReference>
<dbReference type="GO" id="GO:0006096">
    <property type="term" value="P:glycolytic process"/>
    <property type="evidence" value="ECO:0000318"/>
    <property type="project" value="GO_Central"/>
</dbReference>
<dbReference type="CDD" id="cd03313">
    <property type="entry name" value="enolase"/>
    <property type="match status" value="1"/>
</dbReference>
<dbReference type="FunFam" id="3.20.20.120:FF:000001">
    <property type="entry name" value="Enolase"/>
    <property type="match status" value="1"/>
</dbReference>
<dbReference type="FunFam" id="3.30.390.10:FF:000001">
    <property type="entry name" value="Enolase"/>
    <property type="match status" value="1"/>
</dbReference>
<dbReference type="Gene3D" id="3.20.20.120">
    <property type="entry name" value="Enolase-like C-terminal domain"/>
    <property type="match status" value="1"/>
</dbReference>
<dbReference type="Gene3D" id="3.30.390.10">
    <property type="entry name" value="Enolase-like, N-terminal domain"/>
    <property type="match status" value="1"/>
</dbReference>
<dbReference type="HAMAP" id="MF_00318">
    <property type="entry name" value="Enolase"/>
    <property type="match status" value="1"/>
</dbReference>
<dbReference type="InterPro" id="IPR000941">
    <property type="entry name" value="Enolase"/>
</dbReference>
<dbReference type="InterPro" id="IPR036849">
    <property type="entry name" value="Enolase-like_C_sf"/>
</dbReference>
<dbReference type="InterPro" id="IPR029017">
    <property type="entry name" value="Enolase-like_N"/>
</dbReference>
<dbReference type="InterPro" id="IPR020810">
    <property type="entry name" value="Enolase_C"/>
</dbReference>
<dbReference type="InterPro" id="IPR020809">
    <property type="entry name" value="Enolase_CS"/>
</dbReference>
<dbReference type="InterPro" id="IPR020811">
    <property type="entry name" value="Enolase_N"/>
</dbReference>
<dbReference type="NCBIfam" id="TIGR01060">
    <property type="entry name" value="eno"/>
    <property type="match status" value="1"/>
</dbReference>
<dbReference type="PANTHER" id="PTHR11902">
    <property type="entry name" value="ENOLASE"/>
    <property type="match status" value="1"/>
</dbReference>
<dbReference type="PANTHER" id="PTHR11902:SF1">
    <property type="entry name" value="ENOLASE"/>
    <property type="match status" value="1"/>
</dbReference>
<dbReference type="Pfam" id="PF00113">
    <property type="entry name" value="Enolase_C"/>
    <property type="match status" value="1"/>
</dbReference>
<dbReference type="Pfam" id="PF03952">
    <property type="entry name" value="Enolase_N"/>
    <property type="match status" value="1"/>
</dbReference>
<dbReference type="PIRSF" id="PIRSF001400">
    <property type="entry name" value="Enolase"/>
    <property type="match status" value="1"/>
</dbReference>
<dbReference type="PRINTS" id="PR00148">
    <property type="entry name" value="ENOLASE"/>
</dbReference>
<dbReference type="SFLD" id="SFLDS00001">
    <property type="entry name" value="Enolase"/>
    <property type="match status" value="1"/>
</dbReference>
<dbReference type="SFLD" id="SFLDF00002">
    <property type="entry name" value="enolase"/>
    <property type="match status" value="1"/>
</dbReference>
<dbReference type="SMART" id="SM01192">
    <property type="entry name" value="Enolase_C"/>
    <property type="match status" value="1"/>
</dbReference>
<dbReference type="SMART" id="SM01193">
    <property type="entry name" value="Enolase_N"/>
    <property type="match status" value="1"/>
</dbReference>
<dbReference type="SUPFAM" id="SSF51604">
    <property type="entry name" value="Enolase C-terminal domain-like"/>
    <property type="match status" value="1"/>
</dbReference>
<dbReference type="SUPFAM" id="SSF54826">
    <property type="entry name" value="Enolase N-terminal domain-like"/>
    <property type="match status" value="1"/>
</dbReference>
<dbReference type="PROSITE" id="PS00164">
    <property type="entry name" value="ENOLASE"/>
    <property type="match status" value="1"/>
</dbReference>
<name>ENO_GEOSL</name>